<gene>
    <name evidence="1" type="primary">caiA</name>
    <name type="ordered locus">SG0076</name>
</gene>
<proteinExistence type="inferred from homology"/>
<accession>B5RGA6</accession>
<feature type="chain" id="PRO_1000136281" description="Crotonobetainyl-CoA reductase">
    <location>
        <begin position="1"/>
        <end position="380"/>
    </location>
</feature>
<organism>
    <name type="scientific">Salmonella gallinarum (strain 287/91 / NCTC 13346)</name>
    <dbReference type="NCBI Taxonomy" id="550538"/>
    <lineage>
        <taxon>Bacteria</taxon>
        <taxon>Pseudomonadati</taxon>
        <taxon>Pseudomonadota</taxon>
        <taxon>Gammaproteobacteria</taxon>
        <taxon>Enterobacterales</taxon>
        <taxon>Enterobacteriaceae</taxon>
        <taxon>Salmonella</taxon>
    </lineage>
</organism>
<protein>
    <recommendedName>
        <fullName evidence="1">Crotonobetainyl-CoA reductase</fullName>
        <ecNumber evidence="1">1.3.8.13</ecNumber>
    </recommendedName>
    <alternativeName>
        <fullName evidence="1">Crotonobetainyl-CoA dehydrogenase</fullName>
    </alternativeName>
</protein>
<name>CAIA_SALG2</name>
<sequence>MDFNLNDEQELFVAGIRELMASENWEAYFAECDRDSVYPERFVKALADMGIDSLLIPEEHGGLEAGFVTVAAVWMELGRLGAPTYVLYQLPGGFNTFLREGTQEQIDKIMAFRGTGKQMWNSAITEPGAGSDVGSLKTTYTRKNGKVYLNGSKCFITSSAYTPYIVVMARDGASPDKPVYTEWFVDMSKAGIKVNKLEKLGLRMDSCCEITFDDVELDEKDMFGREGNGFNRVKEEFDHERFLVALTNYGTAMCAFEDAARYANQRVQFGEAIGRFQLIQEKFAHMAIKLNSMKNMLLEAAWKADNGTITSGDAAMCKYFCANAAFEVVDTAMQVLGGVGIAGNHRITRFWRDLRVDRVSGGSDEMQILTLGRAVLKQYR</sequence>
<reference key="1">
    <citation type="journal article" date="2008" name="Genome Res.">
        <title>Comparative genome analysis of Salmonella enteritidis PT4 and Salmonella gallinarum 287/91 provides insights into evolutionary and host adaptation pathways.</title>
        <authorList>
            <person name="Thomson N.R."/>
            <person name="Clayton D.J."/>
            <person name="Windhorst D."/>
            <person name="Vernikos G."/>
            <person name="Davidson S."/>
            <person name="Churcher C."/>
            <person name="Quail M.A."/>
            <person name="Stevens M."/>
            <person name="Jones M.A."/>
            <person name="Watson M."/>
            <person name="Barron A."/>
            <person name="Layton A."/>
            <person name="Pickard D."/>
            <person name="Kingsley R.A."/>
            <person name="Bignell A."/>
            <person name="Clark L."/>
            <person name="Harris B."/>
            <person name="Ormond D."/>
            <person name="Abdellah Z."/>
            <person name="Brooks K."/>
            <person name="Cherevach I."/>
            <person name="Chillingworth T."/>
            <person name="Woodward J."/>
            <person name="Norberczak H."/>
            <person name="Lord A."/>
            <person name="Arrowsmith C."/>
            <person name="Jagels K."/>
            <person name="Moule S."/>
            <person name="Mungall K."/>
            <person name="Saunders M."/>
            <person name="Whitehead S."/>
            <person name="Chabalgoity J.A."/>
            <person name="Maskell D."/>
            <person name="Humphreys T."/>
            <person name="Roberts M."/>
            <person name="Barrow P.A."/>
            <person name="Dougan G."/>
            <person name="Parkhill J."/>
        </authorList>
    </citation>
    <scope>NUCLEOTIDE SEQUENCE [LARGE SCALE GENOMIC DNA]</scope>
    <source>
        <strain>287/91 / NCTC 13346</strain>
    </source>
</reference>
<comment type="function">
    <text evidence="1">Catalyzes the reduction of crotonobetainyl-CoA to gamma-butyrobetainyl-CoA.</text>
</comment>
<comment type="catalytic activity">
    <reaction evidence="1">
        <text>4-(trimethylamino)butanoyl-CoA + oxidized [electron-transfer flavoprotein] + H(+) = crotonobetainyl-CoA + reduced [electron-transfer flavoprotein]</text>
        <dbReference type="Rhea" id="RHEA:51584"/>
        <dbReference type="Rhea" id="RHEA-COMP:10685"/>
        <dbReference type="Rhea" id="RHEA-COMP:10686"/>
        <dbReference type="ChEBI" id="CHEBI:15378"/>
        <dbReference type="ChEBI" id="CHEBI:57692"/>
        <dbReference type="ChEBI" id="CHEBI:58307"/>
        <dbReference type="ChEBI" id="CHEBI:60933"/>
        <dbReference type="ChEBI" id="CHEBI:61513"/>
        <dbReference type="EC" id="1.3.8.13"/>
    </reaction>
</comment>
<comment type="cofactor">
    <cofactor evidence="1">
        <name>FAD</name>
        <dbReference type="ChEBI" id="CHEBI:57692"/>
    </cofactor>
</comment>
<comment type="pathway">
    <text evidence="1">Amine and polyamine metabolism; carnitine metabolism.</text>
</comment>
<comment type="subunit">
    <text evidence="1">Homotetramer.</text>
</comment>
<comment type="subcellular location">
    <subcellularLocation>
        <location evidence="1">Cytoplasm</location>
    </subcellularLocation>
</comment>
<comment type="similarity">
    <text evidence="1">Belongs to the acyl-CoA dehydrogenase family.</text>
</comment>
<keyword id="KW-0963">Cytoplasm</keyword>
<keyword id="KW-0274">FAD</keyword>
<keyword id="KW-0285">Flavoprotein</keyword>
<keyword id="KW-0560">Oxidoreductase</keyword>
<dbReference type="EC" id="1.3.8.13" evidence="1"/>
<dbReference type="EMBL" id="AM933173">
    <property type="protein sequence ID" value="CAR35983.1"/>
    <property type="molecule type" value="Genomic_DNA"/>
</dbReference>
<dbReference type="RefSeq" id="WP_000347134.1">
    <property type="nucleotide sequence ID" value="NC_011274.1"/>
</dbReference>
<dbReference type="SMR" id="B5RGA6"/>
<dbReference type="GeneID" id="44979088"/>
<dbReference type="KEGG" id="seg:SG0076"/>
<dbReference type="HOGENOM" id="CLU_018204_0_2_6"/>
<dbReference type="UniPathway" id="UPA00117"/>
<dbReference type="Proteomes" id="UP000008321">
    <property type="component" value="Chromosome"/>
</dbReference>
<dbReference type="GO" id="GO:0005737">
    <property type="term" value="C:cytoplasm"/>
    <property type="evidence" value="ECO:0007669"/>
    <property type="project" value="UniProtKB-SubCell"/>
</dbReference>
<dbReference type="GO" id="GO:0003995">
    <property type="term" value="F:acyl-CoA dehydrogenase activity"/>
    <property type="evidence" value="ECO:0007669"/>
    <property type="project" value="InterPro"/>
</dbReference>
<dbReference type="GO" id="GO:0050660">
    <property type="term" value="F:flavin adenine dinucleotide binding"/>
    <property type="evidence" value="ECO:0007669"/>
    <property type="project" value="InterPro"/>
</dbReference>
<dbReference type="GO" id="GO:0009437">
    <property type="term" value="P:carnitine metabolic process"/>
    <property type="evidence" value="ECO:0007669"/>
    <property type="project" value="UniProtKB-UniRule"/>
</dbReference>
<dbReference type="CDD" id="cd00567">
    <property type="entry name" value="ACAD"/>
    <property type="match status" value="1"/>
</dbReference>
<dbReference type="FunFam" id="1.20.140.10:FF:000001">
    <property type="entry name" value="Acyl-CoA dehydrogenase"/>
    <property type="match status" value="1"/>
</dbReference>
<dbReference type="FunFam" id="2.40.110.10:FF:000002">
    <property type="entry name" value="Acyl-CoA dehydrogenase fadE12"/>
    <property type="match status" value="1"/>
</dbReference>
<dbReference type="FunFam" id="1.10.540.10:FF:000005">
    <property type="entry name" value="Crotonobetainyl-CoA reductase"/>
    <property type="match status" value="1"/>
</dbReference>
<dbReference type="Gene3D" id="1.10.540.10">
    <property type="entry name" value="Acyl-CoA dehydrogenase/oxidase, N-terminal domain"/>
    <property type="match status" value="1"/>
</dbReference>
<dbReference type="Gene3D" id="2.40.110.10">
    <property type="entry name" value="Butyryl-CoA Dehydrogenase, subunit A, domain 2"/>
    <property type="match status" value="1"/>
</dbReference>
<dbReference type="Gene3D" id="1.20.140.10">
    <property type="entry name" value="Butyryl-CoA Dehydrogenase, subunit A, domain 3"/>
    <property type="match status" value="1"/>
</dbReference>
<dbReference type="HAMAP" id="MF_01052">
    <property type="entry name" value="CaiA"/>
    <property type="match status" value="1"/>
</dbReference>
<dbReference type="InterPro" id="IPR006089">
    <property type="entry name" value="Acyl-CoA_DH_CS"/>
</dbReference>
<dbReference type="InterPro" id="IPR006091">
    <property type="entry name" value="Acyl-CoA_Oxase/DH_mid-dom"/>
</dbReference>
<dbReference type="InterPro" id="IPR046373">
    <property type="entry name" value="Acyl-CoA_Oxase/DH_mid-dom_sf"/>
</dbReference>
<dbReference type="InterPro" id="IPR036250">
    <property type="entry name" value="AcylCo_DH-like_C"/>
</dbReference>
<dbReference type="InterPro" id="IPR009075">
    <property type="entry name" value="AcylCo_DH/oxidase_C"/>
</dbReference>
<dbReference type="InterPro" id="IPR013786">
    <property type="entry name" value="AcylCoA_DH/ox_N"/>
</dbReference>
<dbReference type="InterPro" id="IPR037069">
    <property type="entry name" value="AcylCoA_DH/ox_N_sf"/>
</dbReference>
<dbReference type="InterPro" id="IPR009100">
    <property type="entry name" value="AcylCoA_DH/oxidase_NM_dom_sf"/>
</dbReference>
<dbReference type="InterPro" id="IPR023450">
    <property type="entry name" value="CaiA"/>
</dbReference>
<dbReference type="NCBIfam" id="NF002885">
    <property type="entry name" value="PRK03354.1"/>
    <property type="match status" value="1"/>
</dbReference>
<dbReference type="PANTHER" id="PTHR43884">
    <property type="entry name" value="ACYL-COA DEHYDROGENASE"/>
    <property type="match status" value="1"/>
</dbReference>
<dbReference type="PANTHER" id="PTHR43884:SF12">
    <property type="entry name" value="ISOVALERYL-COA DEHYDROGENASE, MITOCHONDRIAL-RELATED"/>
    <property type="match status" value="1"/>
</dbReference>
<dbReference type="Pfam" id="PF00441">
    <property type="entry name" value="Acyl-CoA_dh_1"/>
    <property type="match status" value="1"/>
</dbReference>
<dbReference type="Pfam" id="PF02770">
    <property type="entry name" value="Acyl-CoA_dh_M"/>
    <property type="match status" value="1"/>
</dbReference>
<dbReference type="Pfam" id="PF02771">
    <property type="entry name" value="Acyl-CoA_dh_N"/>
    <property type="match status" value="1"/>
</dbReference>
<dbReference type="PIRSF" id="PIRSF016578">
    <property type="entry name" value="HsaA"/>
    <property type="match status" value="1"/>
</dbReference>
<dbReference type="SUPFAM" id="SSF47203">
    <property type="entry name" value="Acyl-CoA dehydrogenase C-terminal domain-like"/>
    <property type="match status" value="1"/>
</dbReference>
<dbReference type="SUPFAM" id="SSF56645">
    <property type="entry name" value="Acyl-CoA dehydrogenase NM domain-like"/>
    <property type="match status" value="1"/>
</dbReference>
<dbReference type="PROSITE" id="PS00072">
    <property type="entry name" value="ACYL_COA_DH_1"/>
    <property type="match status" value="1"/>
</dbReference>
<dbReference type="PROSITE" id="PS00073">
    <property type="entry name" value="ACYL_COA_DH_2"/>
    <property type="match status" value="1"/>
</dbReference>
<evidence type="ECO:0000255" key="1">
    <source>
        <dbReference type="HAMAP-Rule" id="MF_01052"/>
    </source>
</evidence>